<sequence length="237" mass="26887">MQQSKEERVHDVFEKISDKYDVMNSVISFQRHKAWRKETMRIMDVKPGSKALDVCCGTADWTIALAGAVGEQGKVVGLDFSENMLSVGKQKVEALQLKQVELLHGNAMELPFEDNTFDYVTIGFGLRNVPDYMHVLKEMTRVVKPGGKVICLETSQPTMIGFRQGYILYFKYIMPLFGKLFAKSYKEYSWLQESASTFPGMKELANMFEKAGLERVQVKPFTFGVAAMHLGMKPESK</sequence>
<protein>
    <recommendedName>
        <fullName evidence="1">Demethylmenaquinone methyltransferase</fullName>
        <ecNumber evidence="1">2.1.1.163</ecNumber>
    </recommendedName>
</protein>
<accession>C3L8S6</accession>
<keyword id="KW-0474">Menaquinone biosynthesis</keyword>
<keyword id="KW-0489">Methyltransferase</keyword>
<keyword id="KW-0949">S-adenosyl-L-methionine</keyword>
<keyword id="KW-0808">Transferase</keyword>
<dbReference type="EC" id="2.1.1.163" evidence="1"/>
<dbReference type="EMBL" id="CP001215">
    <property type="protein sequence ID" value="ACP16112.1"/>
    <property type="molecule type" value="Genomic_DNA"/>
</dbReference>
<dbReference type="RefSeq" id="WP_001187667.1">
    <property type="nucleotide sequence ID" value="NC_012581.1"/>
</dbReference>
<dbReference type="SMR" id="C3L8S6"/>
<dbReference type="GeneID" id="75084824"/>
<dbReference type="KEGG" id="bah:BAMEG_3059"/>
<dbReference type="HOGENOM" id="CLU_037990_0_0_9"/>
<dbReference type="UniPathway" id="UPA00079">
    <property type="reaction ID" value="UER00169"/>
</dbReference>
<dbReference type="GO" id="GO:0043770">
    <property type="term" value="F:demethylmenaquinone methyltransferase activity"/>
    <property type="evidence" value="ECO:0007669"/>
    <property type="project" value="UniProtKB-UniRule"/>
</dbReference>
<dbReference type="GO" id="GO:0009234">
    <property type="term" value="P:menaquinone biosynthetic process"/>
    <property type="evidence" value="ECO:0007669"/>
    <property type="project" value="UniProtKB-UniRule"/>
</dbReference>
<dbReference type="GO" id="GO:0032259">
    <property type="term" value="P:methylation"/>
    <property type="evidence" value="ECO:0007669"/>
    <property type="project" value="UniProtKB-KW"/>
</dbReference>
<dbReference type="CDD" id="cd02440">
    <property type="entry name" value="AdoMet_MTases"/>
    <property type="match status" value="1"/>
</dbReference>
<dbReference type="FunFam" id="3.40.50.150:FF:000086">
    <property type="entry name" value="Demethylmenaquinone methyltransferase"/>
    <property type="match status" value="1"/>
</dbReference>
<dbReference type="Gene3D" id="3.40.50.150">
    <property type="entry name" value="Vaccinia Virus protein VP39"/>
    <property type="match status" value="1"/>
</dbReference>
<dbReference type="HAMAP" id="MF_01813">
    <property type="entry name" value="MenG_UbiE_methyltr"/>
    <property type="match status" value="1"/>
</dbReference>
<dbReference type="InterPro" id="IPR014122">
    <property type="entry name" value="MenG_heptapren"/>
</dbReference>
<dbReference type="InterPro" id="IPR029063">
    <property type="entry name" value="SAM-dependent_MTases_sf"/>
</dbReference>
<dbReference type="InterPro" id="IPR004033">
    <property type="entry name" value="UbiE/COQ5_MeTrFase"/>
</dbReference>
<dbReference type="InterPro" id="IPR023576">
    <property type="entry name" value="UbiE/COQ5_MeTrFase_CS"/>
</dbReference>
<dbReference type="NCBIfam" id="TIGR02752">
    <property type="entry name" value="MenG_heptapren"/>
    <property type="match status" value="1"/>
</dbReference>
<dbReference type="NCBIfam" id="TIGR01934">
    <property type="entry name" value="MenG_MenH_UbiE"/>
    <property type="match status" value="1"/>
</dbReference>
<dbReference type="NCBIfam" id="NF001243">
    <property type="entry name" value="PRK00216.1-4"/>
    <property type="match status" value="1"/>
</dbReference>
<dbReference type="NCBIfam" id="NF001244">
    <property type="entry name" value="PRK00216.1-5"/>
    <property type="match status" value="1"/>
</dbReference>
<dbReference type="PANTHER" id="PTHR43591:SF24">
    <property type="entry name" value="2-METHOXY-6-POLYPRENYL-1,4-BENZOQUINOL METHYLASE, MITOCHONDRIAL"/>
    <property type="match status" value="1"/>
</dbReference>
<dbReference type="PANTHER" id="PTHR43591">
    <property type="entry name" value="METHYLTRANSFERASE"/>
    <property type="match status" value="1"/>
</dbReference>
<dbReference type="Pfam" id="PF01209">
    <property type="entry name" value="Ubie_methyltran"/>
    <property type="match status" value="1"/>
</dbReference>
<dbReference type="SUPFAM" id="SSF53335">
    <property type="entry name" value="S-adenosyl-L-methionine-dependent methyltransferases"/>
    <property type="match status" value="1"/>
</dbReference>
<dbReference type="PROSITE" id="PS51608">
    <property type="entry name" value="SAM_MT_UBIE"/>
    <property type="match status" value="1"/>
</dbReference>
<dbReference type="PROSITE" id="PS01183">
    <property type="entry name" value="UBIE_1"/>
    <property type="match status" value="1"/>
</dbReference>
<dbReference type="PROSITE" id="PS01184">
    <property type="entry name" value="UBIE_2"/>
    <property type="match status" value="1"/>
</dbReference>
<evidence type="ECO:0000255" key="1">
    <source>
        <dbReference type="HAMAP-Rule" id="MF_01813"/>
    </source>
</evidence>
<proteinExistence type="inferred from homology"/>
<reference key="1">
    <citation type="submission" date="2008-10" db="EMBL/GenBank/DDBJ databases">
        <title>Genome sequence of Bacillus anthracis str. CDC 684.</title>
        <authorList>
            <person name="Dodson R.J."/>
            <person name="Munk A.C."/>
            <person name="Brettin T."/>
            <person name="Bruce D."/>
            <person name="Detter C."/>
            <person name="Tapia R."/>
            <person name="Han C."/>
            <person name="Sutton G."/>
            <person name="Sims D."/>
        </authorList>
    </citation>
    <scope>NUCLEOTIDE SEQUENCE [LARGE SCALE GENOMIC DNA]</scope>
    <source>
        <strain>CDC 684 / NRRL 3495</strain>
    </source>
</reference>
<comment type="function">
    <text evidence="1">Methyltransferase required for the conversion of demethylmenaquinol (DMKH2) to menaquinol (MKH2).</text>
</comment>
<comment type="catalytic activity">
    <reaction evidence="1">
        <text>a 2-demethylmenaquinol + S-adenosyl-L-methionine = a menaquinol + S-adenosyl-L-homocysteine + H(+)</text>
        <dbReference type="Rhea" id="RHEA:42640"/>
        <dbReference type="Rhea" id="RHEA-COMP:9539"/>
        <dbReference type="Rhea" id="RHEA-COMP:9563"/>
        <dbReference type="ChEBI" id="CHEBI:15378"/>
        <dbReference type="ChEBI" id="CHEBI:18151"/>
        <dbReference type="ChEBI" id="CHEBI:55437"/>
        <dbReference type="ChEBI" id="CHEBI:57856"/>
        <dbReference type="ChEBI" id="CHEBI:59789"/>
        <dbReference type="EC" id="2.1.1.163"/>
    </reaction>
</comment>
<comment type="pathway">
    <text evidence="1">Quinol/quinone metabolism; menaquinone biosynthesis; menaquinol from 1,4-dihydroxy-2-naphthoate: step 2/2.</text>
</comment>
<comment type="similarity">
    <text evidence="1">Belongs to the class I-like SAM-binding methyltransferase superfamily. MenG/UbiE family.</text>
</comment>
<feature type="chain" id="PRO_1000187726" description="Demethylmenaquinone methyltransferase">
    <location>
        <begin position="1"/>
        <end position="237"/>
    </location>
</feature>
<feature type="binding site" evidence="1">
    <location>
        <position position="58"/>
    </location>
    <ligand>
        <name>S-adenosyl-L-methionine</name>
        <dbReference type="ChEBI" id="CHEBI:59789"/>
    </ligand>
</feature>
<feature type="binding site" evidence="1">
    <location>
        <position position="79"/>
    </location>
    <ligand>
        <name>S-adenosyl-L-methionine</name>
        <dbReference type="ChEBI" id="CHEBI:59789"/>
    </ligand>
</feature>
<feature type="binding site" evidence="1">
    <location>
        <begin position="106"/>
        <end position="107"/>
    </location>
    <ligand>
        <name>S-adenosyl-L-methionine</name>
        <dbReference type="ChEBI" id="CHEBI:59789"/>
    </ligand>
</feature>
<name>MENG_BACAC</name>
<organism>
    <name type="scientific">Bacillus anthracis (strain CDC 684 / NRRL 3495)</name>
    <dbReference type="NCBI Taxonomy" id="568206"/>
    <lineage>
        <taxon>Bacteria</taxon>
        <taxon>Bacillati</taxon>
        <taxon>Bacillota</taxon>
        <taxon>Bacilli</taxon>
        <taxon>Bacillales</taxon>
        <taxon>Bacillaceae</taxon>
        <taxon>Bacillus</taxon>
        <taxon>Bacillus cereus group</taxon>
    </lineage>
</organism>
<gene>
    <name evidence="1" type="primary">menG</name>
    <name type="ordered locus">BAMEG_3059</name>
</gene>